<proteinExistence type="inferred from homology"/>
<sequence>MSDNTGVPEASVETTSVFRADLLKEMESGSQHDASPAGVEGLPEGSALLVVKRGPNAGSRFLLDQETTAAGRHPDSDIFLDDVTVSRRHAEFRRNGDQYEVVDVGSLNGTYVNREPKNSSVLSNGDEIQIGKFRLVFLNGSKEA</sequence>
<feature type="initiator methionine" description="Removed" evidence="1">
    <location>
        <position position="1"/>
    </location>
</feature>
<feature type="chain" id="PRO_0000272965" description="Oxoglutarate dehydrogenase inhibitor">
    <location>
        <begin position="2"/>
        <end position="144"/>
    </location>
</feature>
<feature type="domain" description="FHA" evidence="2">
    <location>
        <begin position="68"/>
        <end position="117"/>
    </location>
</feature>
<feature type="modified residue" description="Phosphothreonine" evidence="1">
    <location>
        <position position="14"/>
    </location>
</feature>
<gene>
    <name type="primary">odhI</name>
    <name type="ordered locus">jk0903</name>
</gene>
<protein>
    <recommendedName>
        <fullName>Oxoglutarate dehydrogenase inhibitor</fullName>
    </recommendedName>
</protein>
<reference key="1">
    <citation type="journal article" date="2005" name="J. Bacteriol.">
        <title>Complete genome sequence and analysis of the multiresistant nosocomial pathogen Corynebacterium jeikeium K411, a lipid-requiring bacterium of the human skin flora.</title>
        <authorList>
            <person name="Tauch A."/>
            <person name="Kaiser O."/>
            <person name="Hain T."/>
            <person name="Goesmann A."/>
            <person name="Weisshaar B."/>
            <person name="Albersmeier A."/>
            <person name="Bekel T."/>
            <person name="Bischoff N."/>
            <person name="Brune I."/>
            <person name="Chakraborty T."/>
            <person name="Kalinowski J."/>
            <person name="Meyer F."/>
            <person name="Rupp O."/>
            <person name="Schneiker S."/>
            <person name="Viehoever P."/>
            <person name="Puehler A."/>
        </authorList>
    </citation>
    <scope>NUCLEOTIDE SEQUENCE [LARGE SCALE GENOMIC DNA]</scope>
    <source>
        <strain>K411</strain>
    </source>
</reference>
<name>ODHI_CORJK</name>
<keyword id="KW-0963">Cytoplasm</keyword>
<keyword id="KW-0597">Phosphoprotein</keyword>
<keyword id="KW-1185">Reference proteome</keyword>
<comment type="function">
    <text evidence="1">An essential component of the PknG signaling pathway. When unphosphorylated, it inhibits the activity of 2-oxoglutarate dehydrogenase. When phosphorylated it does not inhibit 2-oxoglutarate dehydrogenase (By similarity).</text>
</comment>
<comment type="subcellular location">
    <subcellularLocation>
        <location evidence="3">Cytoplasm</location>
    </subcellularLocation>
</comment>
<evidence type="ECO:0000250" key="1"/>
<evidence type="ECO:0000255" key="2">
    <source>
        <dbReference type="PROSITE-ProRule" id="PRU00086"/>
    </source>
</evidence>
<evidence type="ECO:0000305" key="3"/>
<accession>Q4JVU0</accession>
<organism>
    <name type="scientific">Corynebacterium jeikeium (strain K411)</name>
    <dbReference type="NCBI Taxonomy" id="306537"/>
    <lineage>
        <taxon>Bacteria</taxon>
        <taxon>Bacillati</taxon>
        <taxon>Actinomycetota</taxon>
        <taxon>Actinomycetes</taxon>
        <taxon>Mycobacteriales</taxon>
        <taxon>Corynebacteriaceae</taxon>
        <taxon>Corynebacterium</taxon>
    </lineage>
</organism>
<dbReference type="EMBL" id="CR931997">
    <property type="protein sequence ID" value="CAI37067.1"/>
    <property type="molecule type" value="Genomic_DNA"/>
</dbReference>
<dbReference type="RefSeq" id="WP_005294594.1">
    <property type="nucleotide sequence ID" value="NC_007164.1"/>
</dbReference>
<dbReference type="SMR" id="Q4JVU0"/>
<dbReference type="STRING" id="306537.jk0903"/>
<dbReference type="GeneID" id="92738424"/>
<dbReference type="KEGG" id="cjk:jk0903"/>
<dbReference type="eggNOG" id="COG1716">
    <property type="taxonomic scope" value="Bacteria"/>
</dbReference>
<dbReference type="HOGENOM" id="CLU_108862_1_0_11"/>
<dbReference type="OrthoDB" id="9815925at2"/>
<dbReference type="Proteomes" id="UP000000545">
    <property type="component" value="Chromosome"/>
</dbReference>
<dbReference type="GO" id="GO:0005737">
    <property type="term" value="C:cytoplasm"/>
    <property type="evidence" value="ECO:0007669"/>
    <property type="project" value="UniProtKB-SubCell"/>
</dbReference>
<dbReference type="Gene3D" id="2.60.200.20">
    <property type="match status" value="1"/>
</dbReference>
<dbReference type="InterPro" id="IPR050923">
    <property type="entry name" value="Cell_Proc_Reg/RNA_Proc"/>
</dbReference>
<dbReference type="InterPro" id="IPR000253">
    <property type="entry name" value="FHA_dom"/>
</dbReference>
<dbReference type="InterPro" id="IPR048204">
    <property type="entry name" value="OxygluDhInhib_OdhI"/>
</dbReference>
<dbReference type="InterPro" id="IPR008984">
    <property type="entry name" value="SMAD_FHA_dom_sf"/>
</dbReference>
<dbReference type="NCBIfam" id="NF041660">
    <property type="entry name" value="oxygluDhInhib_OdhI"/>
    <property type="match status" value="1"/>
</dbReference>
<dbReference type="PANTHER" id="PTHR23308">
    <property type="entry name" value="NUCLEAR INHIBITOR OF PROTEIN PHOSPHATASE-1"/>
    <property type="match status" value="1"/>
</dbReference>
<dbReference type="Pfam" id="PF00498">
    <property type="entry name" value="FHA"/>
    <property type="match status" value="1"/>
</dbReference>
<dbReference type="SMART" id="SM00240">
    <property type="entry name" value="FHA"/>
    <property type="match status" value="1"/>
</dbReference>
<dbReference type="SUPFAM" id="SSF49879">
    <property type="entry name" value="SMAD/FHA domain"/>
    <property type="match status" value="1"/>
</dbReference>
<dbReference type="PROSITE" id="PS50006">
    <property type="entry name" value="FHA_DOMAIN"/>
    <property type="match status" value="1"/>
</dbReference>